<gene>
    <name type="primary">ndhF</name>
</gene>
<accession>Q32440</accession>
<accession>A1E9N7</accession>
<name>NU5C_HORVU</name>
<keyword id="KW-0150">Chloroplast</keyword>
<keyword id="KW-0472">Membrane</keyword>
<keyword id="KW-0520">NAD</keyword>
<keyword id="KW-0521">NADP</keyword>
<keyword id="KW-0934">Plastid</keyword>
<keyword id="KW-0618">Plastoquinone</keyword>
<keyword id="KW-0874">Quinone</keyword>
<keyword id="KW-0793">Thylakoid</keyword>
<keyword id="KW-1278">Translocase</keyword>
<keyword id="KW-0812">Transmembrane</keyword>
<keyword id="KW-1133">Transmembrane helix</keyword>
<keyword id="KW-0813">Transport</keyword>
<sequence length="739" mass="82864">MEHTYQYAWVIPLLPLPVIMSMGFGLILIPTATKNLRRIWAFPSVLLLSIAMVFSVQLSIQQINGSSIYQYLWSWTVNNDFSLEFGYLIDPLTSIMLILITTVGILVLIYSDGYMSHDEGYLRFFVYISFFNTSMLGLVTSSNLIQIYFFWELVGMCSYLLIGFWFTRPIAASACQKAFVTNRVGDFGLLLGILGFFWITGSLEFRDLFQIANNWIPNNGINSLLTTLCAFLLFLGAVAKSAQFPLHVWLPDAMEGPTPISALIHAATMVAAGIFLLARLLPLFISLPLIMSFISLVGTITLFLGATLALAQRDIKRSLAYSTMSQLGYMMLALGIGSYQAALFHLITHAYSKALLFLGSGSVIHSMEPLVGYSPDKSQNMVLMGGLRKYIPITRTTFLWGTLSLCGIPPLACFWSKDEILSNSWLYSPFFGIIASFTAGLTAFYMFRIYLLTFGGYLRVHFQNYSSTKESSLYSISLWGKRIPKGVNRDFVLSTTKSGVSFFSQNIPKIQGNTRNRIGSFTTSFGAKNTFAYPHETGNTMLFPLLILLLFTLFIGFIGISFDNGGMDNGIAELTILSKWLTPSKNFTQESSNSFVNSYEFITNAISSVTLAIFGLFIAYIFYGSAYSFFQNLDLINSFVKRNPKKEFLDQVKKNIYSWSYNRGYIDIFYTRVFTLGIRGLTELTEFFDKGVIDGITNGVGLASFCIGEEIKYVGGGRISSYLFFFLCYVSVFLFFFLS</sequence>
<comment type="function">
    <text evidence="1">NDH shuttles electrons from NAD(P)H:plastoquinone, via FMN and iron-sulfur (Fe-S) centers, to quinones in the photosynthetic chain and possibly in a chloroplast respiratory chain. The immediate electron acceptor for the enzyme in this species is believed to be plastoquinone. Couples the redox reaction to proton translocation, and thus conserves the redox energy in a proton gradient (By similarity).</text>
</comment>
<comment type="catalytic activity">
    <reaction>
        <text>a plastoquinone + NADH + (n+1) H(+)(in) = a plastoquinol + NAD(+) + n H(+)(out)</text>
        <dbReference type="Rhea" id="RHEA:42608"/>
        <dbReference type="Rhea" id="RHEA-COMP:9561"/>
        <dbReference type="Rhea" id="RHEA-COMP:9562"/>
        <dbReference type="ChEBI" id="CHEBI:15378"/>
        <dbReference type="ChEBI" id="CHEBI:17757"/>
        <dbReference type="ChEBI" id="CHEBI:57540"/>
        <dbReference type="ChEBI" id="CHEBI:57945"/>
        <dbReference type="ChEBI" id="CHEBI:62192"/>
    </reaction>
</comment>
<comment type="catalytic activity">
    <reaction>
        <text>a plastoquinone + NADPH + (n+1) H(+)(in) = a plastoquinol + NADP(+) + n H(+)(out)</text>
        <dbReference type="Rhea" id="RHEA:42612"/>
        <dbReference type="Rhea" id="RHEA-COMP:9561"/>
        <dbReference type="Rhea" id="RHEA-COMP:9562"/>
        <dbReference type="ChEBI" id="CHEBI:15378"/>
        <dbReference type="ChEBI" id="CHEBI:17757"/>
        <dbReference type="ChEBI" id="CHEBI:57783"/>
        <dbReference type="ChEBI" id="CHEBI:58349"/>
        <dbReference type="ChEBI" id="CHEBI:62192"/>
    </reaction>
</comment>
<comment type="subunit">
    <text evidence="1">NDH is composed of at least 16 different subunits, 5 of which are encoded in the nucleus.</text>
</comment>
<comment type="subcellular location">
    <subcellularLocation>
        <location evidence="1">Plastid</location>
        <location evidence="1">Chloroplast thylakoid membrane</location>
        <topology evidence="1">Multi-pass membrane protein</topology>
    </subcellularLocation>
</comment>
<comment type="similarity">
    <text evidence="3">Belongs to the complex I subunit 5 family.</text>
</comment>
<protein>
    <recommendedName>
        <fullName>NAD(P)H-quinone oxidoreductase subunit 5, chloroplastic</fullName>
        <ecNumber>7.1.1.-</ecNumber>
    </recommendedName>
    <alternativeName>
        <fullName>NAD(P)H dehydrogenase subunit 5</fullName>
    </alternativeName>
    <alternativeName>
        <fullName>NADH-plastoquinone oxidoreductase subunit 5</fullName>
    </alternativeName>
</protein>
<geneLocation type="chloroplast"/>
<dbReference type="EC" id="7.1.1.-"/>
<dbReference type="EMBL" id="EF115541">
    <property type="protein sequence ID" value="ABK79459.1"/>
    <property type="molecule type" value="Genomic_DNA"/>
</dbReference>
<dbReference type="EMBL" id="U22003">
    <property type="protein sequence ID" value="AAA64207.1"/>
    <property type="molecule type" value="Genomic_DNA"/>
</dbReference>
<dbReference type="PIR" id="T04400">
    <property type="entry name" value="T04400"/>
</dbReference>
<dbReference type="RefSeq" id="YP_874699.1">
    <property type="nucleotide sequence ID" value="NC_008590.1"/>
</dbReference>
<dbReference type="SMR" id="Q32440"/>
<dbReference type="GeneID" id="4525163"/>
<dbReference type="OMA" id="WEKLINF"/>
<dbReference type="GO" id="GO:0009535">
    <property type="term" value="C:chloroplast thylakoid membrane"/>
    <property type="evidence" value="ECO:0007669"/>
    <property type="project" value="UniProtKB-SubCell"/>
</dbReference>
<dbReference type="GO" id="GO:0008137">
    <property type="term" value="F:NADH dehydrogenase (ubiquinone) activity"/>
    <property type="evidence" value="ECO:0007669"/>
    <property type="project" value="InterPro"/>
</dbReference>
<dbReference type="GO" id="GO:0048038">
    <property type="term" value="F:quinone binding"/>
    <property type="evidence" value="ECO:0007669"/>
    <property type="project" value="UniProtKB-KW"/>
</dbReference>
<dbReference type="GO" id="GO:0042773">
    <property type="term" value="P:ATP synthesis coupled electron transport"/>
    <property type="evidence" value="ECO:0007669"/>
    <property type="project" value="InterPro"/>
</dbReference>
<dbReference type="GO" id="GO:0015990">
    <property type="term" value="P:electron transport coupled proton transport"/>
    <property type="evidence" value="ECO:0007669"/>
    <property type="project" value="TreeGrafter"/>
</dbReference>
<dbReference type="Gene3D" id="1.20.5.2700">
    <property type="match status" value="1"/>
</dbReference>
<dbReference type="InterPro" id="IPR002128">
    <property type="entry name" value="NADH_UbQ_OxRdtase_chlpt_su5_C"/>
</dbReference>
<dbReference type="InterPro" id="IPR018393">
    <property type="entry name" value="NADHpl_OxRdtase_5_subgr"/>
</dbReference>
<dbReference type="InterPro" id="IPR001750">
    <property type="entry name" value="ND/Mrp_TM"/>
</dbReference>
<dbReference type="InterPro" id="IPR003945">
    <property type="entry name" value="NU5C-like"/>
</dbReference>
<dbReference type="InterPro" id="IPR001516">
    <property type="entry name" value="Proton_antipo_N"/>
</dbReference>
<dbReference type="NCBIfam" id="TIGR01974">
    <property type="entry name" value="NDH_I_L"/>
    <property type="match status" value="1"/>
</dbReference>
<dbReference type="NCBIfam" id="NF005141">
    <property type="entry name" value="PRK06590.1"/>
    <property type="match status" value="1"/>
</dbReference>
<dbReference type="PANTHER" id="PTHR42829">
    <property type="entry name" value="NADH-UBIQUINONE OXIDOREDUCTASE CHAIN 5"/>
    <property type="match status" value="1"/>
</dbReference>
<dbReference type="PANTHER" id="PTHR42829:SF2">
    <property type="entry name" value="NADH-UBIQUINONE OXIDOREDUCTASE CHAIN 5"/>
    <property type="match status" value="1"/>
</dbReference>
<dbReference type="Pfam" id="PF01010">
    <property type="entry name" value="Proton_antipo_C"/>
    <property type="match status" value="1"/>
</dbReference>
<dbReference type="Pfam" id="PF00361">
    <property type="entry name" value="Proton_antipo_M"/>
    <property type="match status" value="1"/>
</dbReference>
<dbReference type="Pfam" id="PF00662">
    <property type="entry name" value="Proton_antipo_N"/>
    <property type="match status" value="1"/>
</dbReference>
<dbReference type="PRINTS" id="PR01434">
    <property type="entry name" value="NADHDHGNASE5"/>
</dbReference>
<dbReference type="PRINTS" id="PR01435">
    <property type="entry name" value="NPOXDRDTASE5"/>
</dbReference>
<reference key="1">
    <citation type="journal article" date="2007" name="Theor. Appl. Genet.">
        <title>Complete chloroplast genome sequences of Hordeum vulgare, Sorghum bicolor and Agrostis stolonifera, and comparative analyses with other grass genomes.</title>
        <authorList>
            <person name="Saski C."/>
            <person name="Lee S.-B."/>
            <person name="Fjellheim S."/>
            <person name="Guda C."/>
            <person name="Jansen R.K."/>
            <person name="Luo H."/>
            <person name="Tomkins J."/>
            <person name="Rognli O.A."/>
            <person name="Daniell H."/>
            <person name="Clarke J.L."/>
        </authorList>
    </citation>
    <scope>NUCLEOTIDE SEQUENCE [LARGE SCALE GENOMIC DNA]</scope>
    <source>
        <strain>cv. Morex</strain>
    </source>
</reference>
<reference key="2">
    <citation type="journal article" date="1995" name="Syst. Bot.">
        <title>A phylogeny of the grass family (Poaceae) based on ndhF sequence data.</title>
        <authorList>
            <person name="Clark L.G."/>
            <person name="Zhang W."/>
            <person name="Wendel J.F."/>
        </authorList>
        <dbReference type="AGRICOLA" id="IND20522020"/>
    </citation>
    <scope>NUCLEOTIDE SEQUENCE [GENOMIC DNA] OF 9-713</scope>
    <source>
        <tissue>Leaf</tissue>
    </source>
</reference>
<feature type="chain" id="PRO_0000118186" description="NAD(P)H-quinone oxidoreductase subunit 5, chloroplastic">
    <location>
        <begin position="1"/>
        <end position="739"/>
    </location>
</feature>
<feature type="transmembrane region" description="Helical" evidence="2">
    <location>
        <begin position="9"/>
        <end position="29"/>
    </location>
</feature>
<feature type="transmembrane region" description="Helical" evidence="2">
    <location>
        <begin position="39"/>
        <end position="59"/>
    </location>
</feature>
<feature type="transmembrane region" description="Helical" evidence="2">
    <location>
        <begin position="89"/>
        <end position="109"/>
    </location>
</feature>
<feature type="transmembrane region" description="Helical" evidence="2">
    <location>
        <begin position="125"/>
        <end position="145"/>
    </location>
</feature>
<feature type="transmembrane region" description="Helical" evidence="2">
    <location>
        <begin position="147"/>
        <end position="167"/>
    </location>
</feature>
<feature type="transmembrane region" description="Helical" evidence="2">
    <location>
        <begin position="185"/>
        <end position="205"/>
    </location>
</feature>
<feature type="transmembrane region" description="Helical" evidence="2">
    <location>
        <begin position="219"/>
        <end position="239"/>
    </location>
</feature>
<feature type="transmembrane region" description="Helical" evidence="2">
    <location>
        <begin position="258"/>
        <end position="278"/>
    </location>
</feature>
<feature type="transmembrane region" description="Helical" evidence="2">
    <location>
        <begin position="280"/>
        <end position="300"/>
    </location>
</feature>
<feature type="transmembrane region" description="Helical" evidence="2">
    <location>
        <begin position="327"/>
        <end position="347"/>
    </location>
</feature>
<feature type="transmembrane region" description="Helical" evidence="2">
    <location>
        <begin position="354"/>
        <end position="374"/>
    </location>
</feature>
<feature type="transmembrane region" description="Helical" evidence="2">
    <location>
        <begin position="396"/>
        <end position="416"/>
    </location>
</feature>
<feature type="transmembrane region" description="Helical" evidence="2">
    <location>
        <begin position="425"/>
        <end position="445"/>
    </location>
</feature>
<feature type="transmembrane region" description="Helical" evidence="2">
    <location>
        <begin position="542"/>
        <end position="562"/>
    </location>
</feature>
<feature type="transmembrane region" description="Helical" evidence="2">
    <location>
        <begin position="610"/>
        <end position="630"/>
    </location>
</feature>
<feature type="transmembrane region" description="Helical" evidence="2">
    <location>
        <begin position="719"/>
        <end position="739"/>
    </location>
</feature>
<feature type="sequence conflict" description="In Ref. 2; AAA64207." evidence="3" ref="2">
    <original>G</original>
    <variation>E</variation>
    <location>
        <position position="273"/>
    </location>
</feature>
<feature type="sequence conflict" description="In Ref. 2; AAA64207." evidence="3" ref="2">
    <original>E</original>
    <variation>G</variation>
    <location>
        <position position="710"/>
    </location>
</feature>
<organism>
    <name type="scientific">Hordeum vulgare</name>
    <name type="common">Barley</name>
    <dbReference type="NCBI Taxonomy" id="4513"/>
    <lineage>
        <taxon>Eukaryota</taxon>
        <taxon>Viridiplantae</taxon>
        <taxon>Streptophyta</taxon>
        <taxon>Embryophyta</taxon>
        <taxon>Tracheophyta</taxon>
        <taxon>Spermatophyta</taxon>
        <taxon>Magnoliopsida</taxon>
        <taxon>Liliopsida</taxon>
        <taxon>Poales</taxon>
        <taxon>Poaceae</taxon>
        <taxon>BOP clade</taxon>
        <taxon>Pooideae</taxon>
        <taxon>Triticodae</taxon>
        <taxon>Triticeae</taxon>
        <taxon>Hordeinae</taxon>
        <taxon>Hordeum</taxon>
    </lineage>
</organism>
<evidence type="ECO:0000250" key="1"/>
<evidence type="ECO:0000255" key="2"/>
<evidence type="ECO:0000305" key="3"/>
<proteinExistence type="inferred from homology"/>